<comment type="function">
    <text evidence="2">Component of the elongator complex which is required for multiple tRNA modifications, including mcm5U (5-methoxycarbonylmethyl uridine), mcm5s2U (5-methoxycarbonylmethyl-2-thiouridine), and ncm5U (5-carbamoylmethyl uridine). The elongator comple catalyzes the formation of carboxymethyluridine in the wobble base at position 34 in tRNAs.</text>
</comment>
<comment type="pathway">
    <text evidence="2">tRNA modification; 5-methoxycarbonylmethyl-2-thiouridine-tRNA biosynthesis.</text>
</comment>
<comment type="subunit">
    <text evidence="2 3">Component of the elongator complex which consists of ELP1, ELP2, ELP3, ELP4, ELP5 and ELP6. Interacts with STAT3 and JAKs (PubMed:10954736).</text>
</comment>
<comment type="subcellular location">
    <subcellularLocation>
        <location evidence="2">Cytoplasm</location>
    </subcellularLocation>
    <subcellularLocation>
        <location evidence="2">Nucleus</location>
    </subcellularLocation>
</comment>
<comment type="alternative products">
    <event type="alternative splicing"/>
    <isoform>
        <id>Q91WG4-1</id>
        <name>1</name>
        <sequence type="displayed"/>
    </isoform>
    <isoform>
        <id>Q91WG4-2</id>
        <name>2</name>
        <sequence type="described" ref="VSP_016534"/>
    </isoform>
</comment>
<comment type="domain">
    <text evidence="1">Folds into a two seven-bladed beta-propeller structure which is required for elongator complex assembly.</text>
</comment>
<comment type="similarity">
    <text evidence="5">Belongs to the WD repeat ELP2 family.</text>
</comment>
<comment type="caution">
    <text evidence="2">The elongator complex was originally thought to play a role in transcription elongation. However, it is no longer thought to play a direct role in this process and its primary function is thought to be in tRNA modification.</text>
</comment>
<protein>
    <recommendedName>
        <fullName>Elongator complex protein 2</fullName>
        <shortName>ELP2</shortName>
    </recommendedName>
    <alternativeName>
        <fullName>STAT3-interacting protein 1</fullName>
        <shortName>StIP1</shortName>
    </alternativeName>
</protein>
<proteinExistence type="evidence at protein level"/>
<gene>
    <name type="primary">Elp2</name>
    <name type="synonym">Statip1</name>
</gene>
<name>ELP2_MOUSE</name>
<dbReference type="EMBL" id="AF291064">
    <property type="protein sequence ID" value="AAG01032.1"/>
    <property type="molecule type" value="mRNA"/>
</dbReference>
<dbReference type="EMBL" id="AK033246">
    <property type="protein sequence ID" value="BAC28210.1"/>
    <property type="molecule type" value="mRNA"/>
</dbReference>
<dbReference type="EMBL" id="AK034457">
    <property type="protein sequence ID" value="BAC28716.1"/>
    <property type="molecule type" value="mRNA"/>
</dbReference>
<dbReference type="EMBL" id="AK050960">
    <property type="protein sequence ID" value="BAC34477.1"/>
    <property type="molecule type" value="mRNA"/>
</dbReference>
<dbReference type="EMBL" id="AK147826">
    <property type="protein sequence ID" value="BAE28163.1"/>
    <property type="molecule type" value="mRNA"/>
</dbReference>
<dbReference type="EMBL" id="AK167725">
    <property type="protein sequence ID" value="BAE39766.1"/>
    <property type="molecule type" value="mRNA"/>
</dbReference>
<dbReference type="EMBL" id="AK167853">
    <property type="protein sequence ID" value="BAE39871.1"/>
    <property type="molecule type" value="mRNA"/>
</dbReference>
<dbReference type="EMBL" id="AK168370">
    <property type="protein sequence ID" value="BAE40302.1"/>
    <property type="molecule type" value="mRNA"/>
</dbReference>
<dbReference type="EMBL" id="BC015284">
    <property type="protein sequence ID" value="AAH15284.1"/>
    <property type="molecule type" value="mRNA"/>
</dbReference>
<dbReference type="EMBL" id="BC051943">
    <property type="protein sequence ID" value="AAH51943.1"/>
    <property type="molecule type" value="mRNA"/>
</dbReference>
<dbReference type="CCDS" id="CCDS29103.1">
    <molecule id="Q91WG4-1"/>
</dbReference>
<dbReference type="RefSeq" id="NP_067423.2">
    <molecule id="Q91WG4-1"/>
    <property type="nucleotide sequence ID" value="NM_021448.2"/>
</dbReference>
<dbReference type="PDB" id="8AVG">
    <property type="method" value="EM"/>
    <property type="resolution" value="4.01 A"/>
    <property type="chains" value="B=1-831"/>
</dbReference>
<dbReference type="PDBsum" id="8AVG"/>
<dbReference type="EMDB" id="EMD-15625"/>
<dbReference type="EMDB" id="EMD-15626"/>
<dbReference type="EMDB" id="EMD-15682"/>
<dbReference type="SMR" id="Q91WG4"/>
<dbReference type="BioGRID" id="208427">
    <property type="interactions" value="22"/>
</dbReference>
<dbReference type="FunCoup" id="Q91WG4">
    <property type="interactions" value="4241"/>
</dbReference>
<dbReference type="STRING" id="10090.ENSMUSP00000157109"/>
<dbReference type="GlyGen" id="Q91WG4">
    <property type="glycosylation" value="1 site, 1 N-linked glycan (1 site)"/>
</dbReference>
<dbReference type="iPTMnet" id="Q91WG4"/>
<dbReference type="PhosphoSitePlus" id="Q91WG4"/>
<dbReference type="SwissPalm" id="Q91WG4"/>
<dbReference type="jPOST" id="Q91WG4"/>
<dbReference type="PaxDb" id="10090-ENSMUSP00000025120"/>
<dbReference type="PeptideAtlas" id="Q91WG4"/>
<dbReference type="ProteomicsDB" id="277854">
    <molecule id="Q91WG4-1"/>
</dbReference>
<dbReference type="ProteomicsDB" id="277855">
    <molecule id="Q91WG4-2"/>
</dbReference>
<dbReference type="Pumba" id="Q91WG4"/>
<dbReference type="Antibodypedia" id="657">
    <property type="antibodies" value="117 antibodies from 25 providers"/>
</dbReference>
<dbReference type="DNASU" id="58523"/>
<dbReference type="Ensembl" id="ENSMUST00000025120.8">
    <molecule id="Q91WG4-2"/>
    <property type="protein sequence ID" value="ENSMUSP00000025120.8"/>
    <property type="gene ID" value="ENSMUSG00000024271.9"/>
</dbReference>
<dbReference type="Ensembl" id="ENSMUST00000234266.2">
    <molecule id="Q91WG4-1"/>
    <property type="protein sequence ID" value="ENSMUSP00000157109.2"/>
    <property type="gene ID" value="ENSMUSG00000024271.9"/>
</dbReference>
<dbReference type="GeneID" id="58523"/>
<dbReference type="KEGG" id="mmu:58523"/>
<dbReference type="UCSC" id="uc008egx.1">
    <molecule id="Q91WG4-1"/>
    <property type="organism name" value="mouse"/>
</dbReference>
<dbReference type="UCSC" id="uc012baj.1">
    <molecule id="Q91WG4-2"/>
    <property type="organism name" value="mouse"/>
</dbReference>
<dbReference type="AGR" id="MGI:1889642"/>
<dbReference type="CTD" id="55250"/>
<dbReference type="MGI" id="MGI:1889642">
    <property type="gene designation" value="Elp2"/>
</dbReference>
<dbReference type="VEuPathDB" id="HostDB:ENSMUSG00000024271"/>
<dbReference type="eggNOG" id="KOG1063">
    <property type="taxonomic scope" value="Eukaryota"/>
</dbReference>
<dbReference type="GeneTree" id="ENSGT00390000000916"/>
<dbReference type="HOGENOM" id="CLU_006430_1_0_1"/>
<dbReference type="InParanoid" id="Q91WG4"/>
<dbReference type="OMA" id="ENFRHIS"/>
<dbReference type="OrthoDB" id="27911at2759"/>
<dbReference type="PhylomeDB" id="Q91WG4"/>
<dbReference type="TreeFam" id="TF105985"/>
<dbReference type="UniPathway" id="UPA00988"/>
<dbReference type="BioGRID-ORCS" id="58523">
    <property type="hits" value="25 hits in 81 CRISPR screens"/>
</dbReference>
<dbReference type="ChiTaRS" id="Elp2">
    <property type="organism name" value="mouse"/>
</dbReference>
<dbReference type="PRO" id="PR:Q91WG4"/>
<dbReference type="Proteomes" id="UP000000589">
    <property type="component" value="Chromosome 18"/>
</dbReference>
<dbReference type="RNAct" id="Q91WG4">
    <property type="molecule type" value="protein"/>
</dbReference>
<dbReference type="Bgee" id="ENSMUSG00000024271">
    <property type="expression patterns" value="Expressed in saccule of membranous labyrinth and 259 other cell types or tissues"/>
</dbReference>
<dbReference type="GO" id="GO:0005829">
    <property type="term" value="C:cytosol"/>
    <property type="evidence" value="ECO:0007669"/>
    <property type="project" value="Ensembl"/>
</dbReference>
<dbReference type="GO" id="GO:0033588">
    <property type="term" value="C:elongator holoenzyme complex"/>
    <property type="evidence" value="ECO:0000250"/>
    <property type="project" value="UniProtKB"/>
</dbReference>
<dbReference type="GO" id="GO:0000502">
    <property type="term" value="C:proteasome complex"/>
    <property type="evidence" value="ECO:0000250"/>
    <property type="project" value="UniProtKB"/>
</dbReference>
<dbReference type="GO" id="GO:0008023">
    <property type="term" value="C:transcription elongation factor complex"/>
    <property type="evidence" value="ECO:0000266"/>
    <property type="project" value="MGI"/>
</dbReference>
<dbReference type="GO" id="GO:0061133">
    <property type="term" value="F:endopeptidase activator activity"/>
    <property type="evidence" value="ECO:0000250"/>
    <property type="project" value="UniProtKB"/>
</dbReference>
<dbReference type="GO" id="GO:0019901">
    <property type="term" value="F:protein kinase binding"/>
    <property type="evidence" value="ECO:0000314"/>
    <property type="project" value="MGI"/>
</dbReference>
<dbReference type="GO" id="GO:0000993">
    <property type="term" value="F:RNA polymerase II complex binding"/>
    <property type="evidence" value="ECO:0007669"/>
    <property type="project" value="Ensembl"/>
</dbReference>
<dbReference type="GO" id="GO:0043248">
    <property type="term" value="P:proteasome assembly"/>
    <property type="evidence" value="ECO:0000250"/>
    <property type="project" value="UniProtKB"/>
</dbReference>
<dbReference type="GO" id="GO:0046425">
    <property type="term" value="P:regulation of receptor signaling pathway via JAK-STAT"/>
    <property type="evidence" value="ECO:0000314"/>
    <property type="project" value="MGI"/>
</dbReference>
<dbReference type="GO" id="GO:0006368">
    <property type="term" value="P:transcription elongation by RNA polymerase II"/>
    <property type="evidence" value="ECO:0000250"/>
    <property type="project" value="UniProtKB"/>
</dbReference>
<dbReference type="GO" id="GO:0002098">
    <property type="term" value="P:tRNA wobble uridine modification"/>
    <property type="evidence" value="ECO:0007669"/>
    <property type="project" value="InterPro"/>
</dbReference>
<dbReference type="CDD" id="cd00200">
    <property type="entry name" value="WD40"/>
    <property type="match status" value="1"/>
</dbReference>
<dbReference type="FunFam" id="2.130.10.10:FF:000575">
    <property type="entry name" value="Elongator acetyltransferase complex subunit 2"/>
    <property type="match status" value="1"/>
</dbReference>
<dbReference type="FunFam" id="2.130.10.10:FF:000679">
    <property type="entry name" value="Elongator acetyltransferase complex subunit 2"/>
    <property type="match status" value="1"/>
</dbReference>
<dbReference type="FunFam" id="2.130.10.10:FF:000771">
    <property type="entry name" value="Elongator acetyltransferase complex subunit 2"/>
    <property type="match status" value="1"/>
</dbReference>
<dbReference type="FunFam" id="2.130.10.10:FF:001021">
    <property type="entry name" value="Elongator acetyltransferase complex subunit 2"/>
    <property type="match status" value="1"/>
</dbReference>
<dbReference type="FunFam" id="2.130.10.10:FF:001422">
    <property type="entry name" value="Putative rna polymerase ii elongator complex subunit elp2 wd repeat superfamily"/>
    <property type="match status" value="1"/>
</dbReference>
<dbReference type="Gene3D" id="2.130.10.10">
    <property type="entry name" value="YVTN repeat-like/Quinoprotein amine dehydrogenase"/>
    <property type="match status" value="5"/>
</dbReference>
<dbReference type="InterPro" id="IPR037289">
    <property type="entry name" value="Elp2"/>
</dbReference>
<dbReference type="InterPro" id="IPR015943">
    <property type="entry name" value="WD40/YVTN_repeat-like_dom_sf"/>
</dbReference>
<dbReference type="InterPro" id="IPR036322">
    <property type="entry name" value="WD40_repeat_dom_sf"/>
</dbReference>
<dbReference type="InterPro" id="IPR001680">
    <property type="entry name" value="WD40_rpt"/>
</dbReference>
<dbReference type="PANTHER" id="PTHR44111">
    <property type="entry name" value="ELONGATOR COMPLEX PROTEIN 2"/>
    <property type="match status" value="1"/>
</dbReference>
<dbReference type="PANTHER" id="PTHR44111:SF1">
    <property type="entry name" value="ELONGATOR COMPLEX PROTEIN 2"/>
    <property type="match status" value="1"/>
</dbReference>
<dbReference type="Pfam" id="PF00400">
    <property type="entry name" value="WD40"/>
    <property type="match status" value="7"/>
</dbReference>
<dbReference type="SMART" id="SM00320">
    <property type="entry name" value="WD40"/>
    <property type="match status" value="10"/>
</dbReference>
<dbReference type="SUPFAM" id="SSF50978">
    <property type="entry name" value="WD40 repeat-like"/>
    <property type="match status" value="3"/>
</dbReference>
<dbReference type="PROSITE" id="PS50082">
    <property type="entry name" value="WD_REPEATS_2"/>
    <property type="match status" value="4"/>
</dbReference>
<dbReference type="PROSITE" id="PS50294">
    <property type="entry name" value="WD_REPEATS_REGION"/>
    <property type="match status" value="2"/>
</dbReference>
<reference key="1">
    <citation type="journal article" date="2000" name="Proc. Natl. Acad. Sci. U.S.A.">
        <title>A Stat3-interacting protein (StIP1) regulates cytokine signal transduction.</title>
        <authorList>
            <person name="Collum R.G."/>
            <person name="Brutsaert S."/>
            <person name="Lee G."/>
            <person name="Schindler C."/>
        </authorList>
    </citation>
    <scope>NUCLEOTIDE SEQUENCE [MRNA] (ISOFORM 1)</scope>
    <scope>INTERACTION WITH STAT3</scope>
</reference>
<reference key="2">
    <citation type="journal article" date="2005" name="Science">
        <title>The transcriptional landscape of the mammalian genome.</title>
        <authorList>
            <person name="Carninci P."/>
            <person name="Kasukawa T."/>
            <person name="Katayama S."/>
            <person name="Gough J."/>
            <person name="Frith M.C."/>
            <person name="Maeda N."/>
            <person name="Oyama R."/>
            <person name="Ravasi T."/>
            <person name="Lenhard B."/>
            <person name="Wells C."/>
            <person name="Kodzius R."/>
            <person name="Shimokawa K."/>
            <person name="Bajic V.B."/>
            <person name="Brenner S.E."/>
            <person name="Batalov S."/>
            <person name="Forrest A.R."/>
            <person name="Zavolan M."/>
            <person name="Davis M.J."/>
            <person name="Wilming L.G."/>
            <person name="Aidinis V."/>
            <person name="Allen J.E."/>
            <person name="Ambesi-Impiombato A."/>
            <person name="Apweiler R."/>
            <person name="Aturaliya R.N."/>
            <person name="Bailey T.L."/>
            <person name="Bansal M."/>
            <person name="Baxter L."/>
            <person name="Beisel K.W."/>
            <person name="Bersano T."/>
            <person name="Bono H."/>
            <person name="Chalk A.M."/>
            <person name="Chiu K.P."/>
            <person name="Choudhary V."/>
            <person name="Christoffels A."/>
            <person name="Clutterbuck D.R."/>
            <person name="Crowe M.L."/>
            <person name="Dalla E."/>
            <person name="Dalrymple B.P."/>
            <person name="de Bono B."/>
            <person name="Della Gatta G."/>
            <person name="di Bernardo D."/>
            <person name="Down T."/>
            <person name="Engstrom P."/>
            <person name="Fagiolini M."/>
            <person name="Faulkner G."/>
            <person name="Fletcher C.F."/>
            <person name="Fukushima T."/>
            <person name="Furuno M."/>
            <person name="Futaki S."/>
            <person name="Gariboldi M."/>
            <person name="Georgii-Hemming P."/>
            <person name="Gingeras T.R."/>
            <person name="Gojobori T."/>
            <person name="Green R.E."/>
            <person name="Gustincich S."/>
            <person name="Harbers M."/>
            <person name="Hayashi Y."/>
            <person name="Hensch T.K."/>
            <person name="Hirokawa N."/>
            <person name="Hill D."/>
            <person name="Huminiecki L."/>
            <person name="Iacono M."/>
            <person name="Ikeo K."/>
            <person name="Iwama A."/>
            <person name="Ishikawa T."/>
            <person name="Jakt M."/>
            <person name="Kanapin A."/>
            <person name="Katoh M."/>
            <person name="Kawasawa Y."/>
            <person name="Kelso J."/>
            <person name="Kitamura H."/>
            <person name="Kitano H."/>
            <person name="Kollias G."/>
            <person name="Krishnan S.P."/>
            <person name="Kruger A."/>
            <person name="Kummerfeld S.K."/>
            <person name="Kurochkin I.V."/>
            <person name="Lareau L.F."/>
            <person name="Lazarevic D."/>
            <person name="Lipovich L."/>
            <person name="Liu J."/>
            <person name="Liuni S."/>
            <person name="McWilliam S."/>
            <person name="Madan Babu M."/>
            <person name="Madera M."/>
            <person name="Marchionni L."/>
            <person name="Matsuda H."/>
            <person name="Matsuzawa S."/>
            <person name="Miki H."/>
            <person name="Mignone F."/>
            <person name="Miyake S."/>
            <person name="Morris K."/>
            <person name="Mottagui-Tabar S."/>
            <person name="Mulder N."/>
            <person name="Nakano N."/>
            <person name="Nakauchi H."/>
            <person name="Ng P."/>
            <person name="Nilsson R."/>
            <person name="Nishiguchi S."/>
            <person name="Nishikawa S."/>
            <person name="Nori F."/>
            <person name="Ohara O."/>
            <person name="Okazaki Y."/>
            <person name="Orlando V."/>
            <person name="Pang K.C."/>
            <person name="Pavan W.J."/>
            <person name="Pavesi G."/>
            <person name="Pesole G."/>
            <person name="Petrovsky N."/>
            <person name="Piazza S."/>
            <person name="Reed J."/>
            <person name="Reid J.F."/>
            <person name="Ring B.Z."/>
            <person name="Ringwald M."/>
            <person name="Rost B."/>
            <person name="Ruan Y."/>
            <person name="Salzberg S.L."/>
            <person name="Sandelin A."/>
            <person name="Schneider C."/>
            <person name="Schoenbach C."/>
            <person name="Sekiguchi K."/>
            <person name="Semple C.A."/>
            <person name="Seno S."/>
            <person name="Sessa L."/>
            <person name="Sheng Y."/>
            <person name="Shibata Y."/>
            <person name="Shimada H."/>
            <person name="Shimada K."/>
            <person name="Silva D."/>
            <person name="Sinclair B."/>
            <person name="Sperling S."/>
            <person name="Stupka E."/>
            <person name="Sugiura K."/>
            <person name="Sultana R."/>
            <person name="Takenaka Y."/>
            <person name="Taki K."/>
            <person name="Tammoja K."/>
            <person name="Tan S.L."/>
            <person name="Tang S."/>
            <person name="Taylor M.S."/>
            <person name="Tegner J."/>
            <person name="Teichmann S.A."/>
            <person name="Ueda H.R."/>
            <person name="van Nimwegen E."/>
            <person name="Verardo R."/>
            <person name="Wei C.L."/>
            <person name="Yagi K."/>
            <person name="Yamanishi H."/>
            <person name="Zabarovsky E."/>
            <person name="Zhu S."/>
            <person name="Zimmer A."/>
            <person name="Hide W."/>
            <person name="Bult C."/>
            <person name="Grimmond S.M."/>
            <person name="Teasdale R.D."/>
            <person name="Liu E.T."/>
            <person name="Brusic V."/>
            <person name="Quackenbush J."/>
            <person name="Wahlestedt C."/>
            <person name="Mattick J.S."/>
            <person name="Hume D.A."/>
            <person name="Kai C."/>
            <person name="Sasaki D."/>
            <person name="Tomaru Y."/>
            <person name="Fukuda S."/>
            <person name="Kanamori-Katayama M."/>
            <person name="Suzuki M."/>
            <person name="Aoki J."/>
            <person name="Arakawa T."/>
            <person name="Iida J."/>
            <person name="Imamura K."/>
            <person name="Itoh M."/>
            <person name="Kato T."/>
            <person name="Kawaji H."/>
            <person name="Kawagashira N."/>
            <person name="Kawashima T."/>
            <person name="Kojima M."/>
            <person name="Kondo S."/>
            <person name="Konno H."/>
            <person name="Nakano K."/>
            <person name="Ninomiya N."/>
            <person name="Nishio T."/>
            <person name="Okada M."/>
            <person name="Plessy C."/>
            <person name="Shibata K."/>
            <person name="Shiraki T."/>
            <person name="Suzuki S."/>
            <person name="Tagami M."/>
            <person name="Waki K."/>
            <person name="Watahiki A."/>
            <person name="Okamura-Oho Y."/>
            <person name="Suzuki H."/>
            <person name="Kawai J."/>
            <person name="Hayashizaki Y."/>
        </authorList>
    </citation>
    <scope>NUCLEOTIDE SEQUENCE [LARGE SCALE MRNA] (ISOFORMS 1 AND 2)</scope>
    <source>
        <strain>BALB/cJ</strain>
        <strain>C57BL/6J</strain>
        <tissue>Diencephalon</tissue>
        <tissue>Embryo</tissue>
        <tissue>Kidney</tissue>
        <tissue>Placenta</tissue>
        <tissue>Testis</tissue>
    </source>
</reference>
<reference key="3">
    <citation type="journal article" date="2004" name="Genome Res.">
        <title>The status, quality, and expansion of the NIH full-length cDNA project: the Mammalian Gene Collection (MGC).</title>
        <authorList>
            <consortium name="The MGC Project Team"/>
        </authorList>
    </citation>
    <scope>NUCLEOTIDE SEQUENCE [LARGE SCALE MRNA] (ISOFORM 1)</scope>
    <source>
        <strain>C57BL/6J</strain>
        <strain>FVB/N</strain>
        <tissue>Brain</tissue>
        <tissue>Kidney</tissue>
    </source>
</reference>
<reference key="4">
    <citation type="journal article" date="2010" name="Cell">
        <title>A tissue-specific atlas of mouse protein phosphorylation and expression.</title>
        <authorList>
            <person name="Huttlin E.L."/>
            <person name="Jedrychowski M.P."/>
            <person name="Elias J.E."/>
            <person name="Goswami T."/>
            <person name="Rad R."/>
            <person name="Beausoleil S.A."/>
            <person name="Villen J."/>
            <person name="Haas W."/>
            <person name="Sowa M.E."/>
            <person name="Gygi S.P."/>
        </authorList>
    </citation>
    <scope>IDENTIFICATION BY MASS SPECTROMETRY [LARGE SCALE ANALYSIS]</scope>
    <source>
        <tissue>Brain</tissue>
        <tissue>Brown adipose tissue</tissue>
        <tissue>Heart</tissue>
        <tissue>Kidney</tissue>
        <tissue>Liver</tissue>
        <tissue>Pancreas</tissue>
        <tissue>Spleen</tissue>
        <tissue>Testis</tissue>
    </source>
</reference>
<accession>Q91WG4</accession>
<accession>Q3TIH5</accession>
<accession>Q3TIT0</accession>
<accession>Q8CBW6</accession>
<accession>Q9ESY7</accession>
<evidence type="ECO:0000250" key="1">
    <source>
        <dbReference type="UniProtKB" id="P42935"/>
    </source>
</evidence>
<evidence type="ECO:0000250" key="2">
    <source>
        <dbReference type="UniProtKB" id="Q6IA86"/>
    </source>
</evidence>
<evidence type="ECO:0000269" key="3">
    <source>
    </source>
</evidence>
<evidence type="ECO:0000303" key="4">
    <source>
    </source>
</evidence>
<evidence type="ECO:0000305" key="5"/>
<organism>
    <name type="scientific">Mus musculus</name>
    <name type="common">Mouse</name>
    <dbReference type="NCBI Taxonomy" id="10090"/>
    <lineage>
        <taxon>Eukaryota</taxon>
        <taxon>Metazoa</taxon>
        <taxon>Chordata</taxon>
        <taxon>Craniata</taxon>
        <taxon>Vertebrata</taxon>
        <taxon>Euteleostomi</taxon>
        <taxon>Mammalia</taxon>
        <taxon>Eutheria</taxon>
        <taxon>Euarchontoglires</taxon>
        <taxon>Glires</taxon>
        <taxon>Rodentia</taxon>
        <taxon>Myomorpha</taxon>
        <taxon>Muroidea</taxon>
        <taxon>Muridae</taxon>
        <taxon>Murinae</taxon>
        <taxon>Mus</taxon>
        <taxon>Mus</taxon>
    </lineage>
</organism>
<feature type="chain" id="PRO_0000051242" description="Elongator complex protein 2">
    <location>
        <begin position="1"/>
        <end position="831"/>
    </location>
</feature>
<feature type="repeat" description="WD 1">
    <location>
        <begin position="56"/>
        <end position="100"/>
    </location>
</feature>
<feature type="repeat" description="WD 2">
    <location>
        <begin position="105"/>
        <end position="152"/>
    </location>
</feature>
<feature type="repeat" description="WD 3">
    <location>
        <begin position="158"/>
        <end position="200"/>
    </location>
</feature>
<feature type="repeat" description="WD 4">
    <location>
        <begin position="205"/>
        <end position="246"/>
    </location>
</feature>
<feature type="repeat" description="WD 5">
    <location>
        <begin position="280"/>
        <end position="328"/>
    </location>
</feature>
<feature type="repeat" description="WD 6">
    <location>
        <begin position="338"/>
        <end position="377"/>
    </location>
</feature>
<feature type="repeat" description="WD 7">
    <location>
        <begin position="385"/>
        <end position="424"/>
    </location>
</feature>
<feature type="repeat" description="WD 8">
    <location>
        <begin position="438"/>
        <end position="476"/>
    </location>
</feature>
<feature type="repeat" description="WD 9">
    <location>
        <begin position="565"/>
        <end position="609"/>
    </location>
</feature>
<feature type="repeat" description="WD 10">
    <location>
        <begin position="612"/>
        <end position="651"/>
    </location>
</feature>
<feature type="repeat" description="WD 11">
    <location>
        <begin position="667"/>
        <end position="706"/>
    </location>
</feature>
<feature type="repeat" description="WD 12">
    <location>
        <begin position="718"/>
        <end position="762"/>
    </location>
</feature>
<feature type="repeat" description="WD 13">
    <location>
        <begin position="775"/>
        <end position="831"/>
    </location>
</feature>
<feature type="splice variant" id="VSP_016534" description="In isoform 2." evidence="4">
    <location>
        <begin position="175"/>
        <end position="264"/>
    </location>
</feature>
<feature type="sequence conflict" description="In Ref. 2; BAE39871." evidence="5" ref="2">
    <original>S</original>
    <variation>G</variation>
    <location>
        <position position="23"/>
    </location>
</feature>
<feature type="sequence conflict" description="In Ref. 1; AAG01032." evidence="5" ref="1">
    <original>D</original>
    <variation>E</variation>
    <location>
        <position position="84"/>
    </location>
</feature>
<feature type="sequence conflict" description="In Ref. 2; BAE39871." evidence="5" ref="2">
    <original>A</original>
    <variation>V</variation>
    <location>
        <position position="112"/>
    </location>
</feature>
<feature type="sequence conflict" description="In Ref. 2; BAE39871." evidence="5" ref="2">
    <original>H</original>
    <variation>N</variation>
    <location>
        <position position="550"/>
    </location>
</feature>
<feature type="sequence conflict" description="In Ref. 2; BAC28716." evidence="5" ref="2">
    <original>G</original>
    <variation>R</variation>
    <location>
        <position position="687"/>
    </location>
</feature>
<keyword id="KW-0002">3D-structure</keyword>
<keyword id="KW-0025">Alternative splicing</keyword>
<keyword id="KW-0963">Cytoplasm</keyword>
<keyword id="KW-0539">Nucleus</keyword>
<keyword id="KW-1185">Reference proteome</keyword>
<keyword id="KW-0677">Repeat</keyword>
<keyword id="KW-0819">tRNA processing</keyword>
<keyword id="KW-0853">WD repeat</keyword>
<sequence>MVSSVLEVSHVFCCPNRVRGALSWNTGPGGLLAFGTSCSVVLYDPQKKVVITNLNGHTARVNCLQWIRTEDGSPSNELVSGGSDNRVIHWELENNQVLKSVRLQGHEGPVCAVHAIYQSGPSEGEQHALIASAASDSTVRIWSKKGSEVKYLQTLSFRDGFVLSVCLAILPGTNVPVLACGDDDCRIHLYIQQDDQFQKALSLCGHEDWIRGVEWATFGRDLFLASCSQDCLIRIWRLYMKPASFETKDGSLRLKENTFTIKDGGVRTTVAVTLETVLAGHENWVNAVHWQPSFYKDGVLQQPVRLLSASMDKTMILWAPDEESGVWLEQVRVGEVGGNTLGFYDCQFGENGTMIIAHAFHGALHLWKQSTVNPRQWAPEIVISGHFDGVQDLMWDPEGEFIITTSTDQTTRLFAPWKKKDQKDRSQVTWHEIARPQIHGYNIKCLAMIDRFQFVSGADEKVLRVFSAPRNFVENFSVISRQSLSHMLCDDQDLPEGATVPALGLSNKALFQGDIASQPFEEDELISPAFGSPQVTFQPAVLNEPPTEDHLLQNTLWPEIQKLYGHGYEIVCVACNNSKTLLASACKASQKEHAAIILWSTASWKQVQSLAFHTLTVTQMTFSPDDKFLLAVSRDRTWSLWKRQDATSSEFDPFFSLFAFTNKITSVHSRIIWSCDWSPDNKYFFTGSRDKKVVVWGECKSSHNPMEHPIRPCSSILDVGSSVTAVSVCPVLNPAQRYIVAIGLESGKICIYSWNKTNQEINDWTSCVETNPSQSHSLGIRRLCWKSCSDDDDDDDDDDTEQSEEGPEWLHFASCGEDHTVKIYRVNRRAL</sequence>